<protein>
    <recommendedName>
        <fullName>Putative dehydrogenase/reductase SDR family member 4-like 1</fullName>
        <ecNumber>1.1.-.-</ecNumber>
    </recommendedName>
    <alternativeName>
        <fullName evidence="6">Short chain dehydrogenase/reductase family 25C member 4</fullName>
        <shortName evidence="6">Protein SDR25C4</shortName>
    </alternativeName>
</protein>
<evidence type="ECO:0000250" key="1"/>
<evidence type="ECO:0000250" key="2">
    <source>
        <dbReference type="UniProtKB" id="Q8WNV7"/>
    </source>
</evidence>
<evidence type="ECO:0000250" key="3">
    <source>
        <dbReference type="UniProtKB" id="Q99714"/>
    </source>
</evidence>
<evidence type="ECO:0000255" key="4">
    <source>
        <dbReference type="PROSITE-ProRule" id="PRU10001"/>
    </source>
</evidence>
<evidence type="ECO:0000269" key="5">
    <source>
    </source>
</evidence>
<evidence type="ECO:0000303" key="6">
    <source>
    </source>
</evidence>
<evidence type="ECO:0000305" key="7"/>
<evidence type="ECO:0000312" key="8">
    <source>
        <dbReference type="HGNC" id="HGNC:19732"/>
    </source>
</evidence>
<keyword id="KW-0520">NAD</keyword>
<keyword id="KW-0521">NADP</keyword>
<keyword id="KW-0560">Oxidoreductase</keyword>
<keyword id="KW-1267">Proteomics identification</keyword>
<keyword id="KW-1185">Reference proteome</keyword>
<comment type="function">
    <text evidence="1">Putative oxidoreductase.</text>
</comment>
<comment type="miscellaneous">
    <text evidence="5">Three homologous proteins DHRS4, DHRS4L1, and DHRS4L2 are derived from gene duplication of DHRS4, and the gene cluster is arranged in tandem in chromosome 14.</text>
</comment>
<comment type="similarity">
    <text evidence="7">Belongs to the short-chain dehydrogenases/reductases (SDR) family.</text>
</comment>
<comment type="caution">
    <text evidence="7">Product of a dubious CDS prediction.</text>
</comment>
<feature type="chain" id="PRO_0000395063" description="Putative dehydrogenase/reductase SDR family member 4-like 1">
    <location>
        <begin position="1"/>
        <end position="281"/>
    </location>
</feature>
<feature type="short sequence motif" description="Peroxisomal targeting signal" evidence="2">
    <location>
        <begin position="279"/>
        <end position="281"/>
    </location>
</feature>
<feature type="active site" description="Proton acceptor" evidence="4">
    <location>
        <position position="185"/>
    </location>
</feature>
<feature type="binding site" evidence="2">
    <location>
        <begin position="36"/>
        <end position="60"/>
    </location>
    <ligand>
        <name>NADP(+)</name>
        <dbReference type="ChEBI" id="CHEBI:58349"/>
    </ligand>
</feature>
<feature type="binding site" evidence="3">
    <location>
        <position position="172"/>
    </location>
    <ligand>
        <name>substrate</name>
    </ligand>
</feature>
<feature type="binding site" evidence="2">
    <location>
        <position position="189"/>
    </location>
    <ligand>
        <name>NADP(+)</name>
        <dbReference type="ChEBI" id="CHEBI:58349"/>
    </ligand>
</feature>
<name>DR4L1_HUMAN</name>
<reference key="1">
    <citation type="journal article" date="2003" name="Nature">
        <title>The DNA sequence and analysis of human chromosome 14.</title>
        <authorList>
            <person name="Heilig R."/>
            <person name="Eckenberg R."/>
            <person name="Petit J.-L."/>
            <person name="Fonknechten N."/>
            <person name="Da Silva C."/>
            <person name="Cattolico L."/>
            <person name="Levy M."/>
            <person name="Barbe V."/>
            <person name="De Berardinis V."/>
            <person name="Ureta-Vidal A."/>
            <person name="Pelletier E."/>
            <person name="Vico V."/>
            <person name="Anthouard V."/>
            <person name="Rowen L."/>
            <person name="Madan A."/>
            <person name="Qin S."/>
            <person name="Sun H."/>
            <person name="Du H."/>
            <person name="Pepin K."/>
            <person name="Artiguenave F."/>
            <person name="Robert C."/>
            <person name="Cruaud C."/>
            <person name="Bruels T."/>
            <person name="Jaillon O."/>
            <person name="Friedlander L."/>
            <person name="Samson G."/>
            <person name="Brottier P."/>
            <person name="Cure S."/>
            <person name="Segurens B."/>
            <person name="Aniere F."/>
            <person name="Samain S."/>
            <person name="Crespeau H."/>
            <person name="Abbasi N."/>
            <person name="Aiach N."/>
            <person name="Boscus D."/>
            <person name="Dickhoff R."/>
            <person name="Dors M."/>
            <person name="Dubois I."/>
            <person name="Friedman C."/>
            <person name="Gouyvenoux M."/>
            <person name="James R."/>
            <person name="Madan A."/>
            <person name="Mairey-Estrada B."/>
            <person name="Mangenot S."/>
            <person name="Martins N."/>
            <person name="Menard M."/>
            <person name="Oztas S."/>
            <person name="Ratcliffe A."/>
            <person name="Shaffer T."/>
            <person name="Trask B."/>
            <person name="Vacherie B."/>
            <person name="Bellemere C."/>
            <person name="Belser C."/>
            <person name="Besnard-Gonnet M."/>
            <person name="Bartol-Mavel D."/>
            <person name="Boutard M."/>
            <person name="Briez-Silla S."/>
            <person name="Combette S."/>
            <person name="Dufosse-Laurent V."/>
            <person name="Ferron C."/>
            <person name="Lechaplais C."/>
            <person name="Louesse C."/>
            <person name="Muselet D."/>
            <person name="Magdelenat G."/>
            <person name="Pateau E."/>
            <person name="Petit E."/>
            <person name="Sirvain-Trukniewicz P."/>
            <person name="Trybou A."/>
            <person name="Vega-Czarny N."/>
            <person name="Bataille E."/>
            <person name="Bluet E."/>
            <person name="Bordelais I."/>
            <person name="Dubois M."/>
            <person name="Dumont C."/>
            <person name="Guerin T."/>
            <person name="Haffray S."/>
            <person name="Hammadi R."/>
            <person name="Muanga J."/>
            <person name="Pellouin V."/>
            <person name="Robert D."/>
            <person name="Wunderle E."/>
            <person name="Gauguet G."/>
            <person name="Roy A."/>
            <person name="Sainte-Marthe L."/>
            <person name="Verdier J."/>
            <person name="Verdier-Discala C."/>
            <person name="Hillier L.W."/>
            <person name="Fulton L."/>
            <person name="McPherson J."/>
            <person name="Matsuda F."/>
            <person name="Wilson R."/>
            <person name="Scarpelli C."/>
            <person name="Gyapay G."/>
            <person name="Wincker P."/>
            <person name="Saurin W."/>
            <person name="Quetier F."/>
            <person name="Waterston R."/>
            <person name="Hood L."/>
            <person name="Weissenbach J."/>
        </authorList>
    </citation>
    <scope>NUCLEOTIDE SEQUENCE [LARGE SCALE GENOMIC DNA]</scope>
</reference>
<reference key="2">
    <citation type="journal article" date="2009" name="Chem. Biol. Interact.">
        <title>The SDR (short-chain dehydrogenase/reductase and related enzymes) nomenclature initiative.</title>
        <authorList>
            <person name="Persson B."/>
            <person name="Kallberg Y."/>
            <person name="Bray J.E."/>
            <person name="Bruford E."/>
            <person name="Dellaporta S.L."/>
            <person name="Favia A.D."/>
            <person name="Duarte R.G."/>
            <person name="Joernvall H."/>
            <person name="Kavanagh K.L."/>
            <person name="Kedishvili N."/>
            <person name="Kisiela M."/>
            <person name="Maser E."/>
            <person name="Mindnich R."/>
            <person name="Orchard S."/>
            <person name="Penning T.M."/>
            <person name="Thornton J.M."/>
            <person name="Adamski J."/>
            <person name="Oppermann U."/>
        </authorList>
    </citation>
    <scope>GENE FAMILY</scope>
    <scope>NOMENCLATURE</scope>
</reference>
<reference key="3">
    <citation type="journal article" date="2016" name="Genet. Mol. Res.">
        <title>CpG island evolution in the mammalian DHRS4 gene cluster and its role in the regulation of gene transcription.</title>
        <authorList>
            <person name="Su Z."/>
            <person name="Liu G."/>
            <person name="Song X."/>
            <person name="Liang B."/>
            <person name="Chang X."/>
            <person name="Huang D."/>
        </authorList>
    </citation>
    <scope>MISCELLANEOUS</scope>
</reference>
<sequence length="281" mass="30608">MHKARLRGHCARAGKSVRLASSGMTRRDPLTNKVALVTASTDWIGFAVAQRLAQDGAHVVVSRRKQQNVDQAVATLQGEGLSMTGTVCHVGKMKDWERLVATAMKLHGVIDILSLSITNSKRGLFWFTLLQTAEEAWDRNLDINGKALALMIKAVVPEMEKRGGGSVGFLASVAAFRPLPGFSPYNVSKTALLGLNKTLAIELAPRNIRVNCLAPGLIKTSFSRMLWMDKEKEESMKETLRIRRLGEPEDSLGIVSFLCSEDASYLTGETVMVGGGTPSRL</sequence>
<proteinExistence type="uncertain"/>
<organism>
    <name type="scientific">Homo sapiens</name>
    <name type="common">Human</name>
    <dbReference type="NCBI Taxonomy" id="9606"/>
    <lineage>
        <taxon>Eukaryota</taxon>
        <taxon>Metazoa</taxon>
        <taxon>Chordata</taxon>
        <taxon>Craniata</taxon>
        <taxon>Vertebrata</taxon>
        <taxon>Euteleostomi</taxon>
        <taxon>Mammalia</taxon>
        <taxon>Eutheria</taxon>
        <taxon>Euarchontoglires</taxon>
        <taxon>Primates</taxon>
        <taxon>Haplorrhini</taxon>
        <taxon>Catarrhini</taxon>
        <taxon>Hominidae</taxon>
        <taxon>Homo</taxon>
    </lineage>
</organism>
<accession>P0CG22</accession>
<dbReference type="EC" id="1.1.-.-"/>
<dbReference type="EMBL" id="AL136295">
    <property type="status" value="NOT_ANNOTATED_CDS"/>
    <property type="molecule type" value="Genomic_DNA"/>
</dbReference>
<dbReference type="SMR" id="P0CG22"/>
<dbReference type="FunCoup" id="P0CG22">
    <property type="interactions" value="65"/>
</dbReference>
<dbReference type="IntAct" id="P0CG22">
    <property type="interactions" value="2"/>
</dbReference>
<dbReference type="DrugBank" id="DB03541">
    <property type="generic name" value="10-Propargyl-5,8-Dideazafolic Acid"/>
</dbReference>
<dbReference type="DrugBank" id="DB02532">
    <property type="generic name" value="2,4,6-Triaminoquinazoline"/>
</dbReference>
<dbReference type="DrugBank" id="DB07765">
    <property type="generic name" value="METHYL 1-(4-{[(2,4-DIAMINOPTERIDIN-6-YL)METHYL](METHYL)AMINO}BENZOYL)PIPERIDINE-4-CARBOXYLATE"/>
</dbReference>
<dbReference type="DrugBank" id="DB07689">
    <property type="generic name" value="METHYL 1-(4-{[(2,4-DIAMINOPTERIDIN-6-YL)METHYL]AMINO}BENZOYL)PIPERIDINE-4-CARBOXYLATE"/>
</dbReference>
<dbReference type="DrugBank" id="DB03461">
    <property type="generic name" value="Nicotinamide adenine dinucleotide phosphate"/>
</dbReference>
<dbReference type="GlyGen" id="P0CG22">
    <property type="glycosylation" value="1 site"/>
</dbReference>
<dbReference type="iPTMnet" id="P0CG22"/>
<dbReference type="PhosphoSitePlus" id="P0CG22"/>
<dbReference type="SwissPalm" id="P0CG22"/>
<dbReference type="BioMuta" id="HGNC:19732"/>
<dbReference type="DMDM" id="298351658"/>
<dbReference type="jPOST" id="P0CG22"/>
<dbReference type="MassIVE" id="P0CG22"/>
<dbReference type="ProteomicsDB" id="52456"/>
<dbReference type="Pumba" id="P0CG22"/>
<dbReference type="AGR" id="HGNC:19732"/>
<dbReference type="GeneCards" id="DHRS4L1"/>
<dbReference type="HGNC" id="HGNC:19732">
    <property type="gene designation" value="DHRS4L1"/>
</dbReference>
<dbReference type="MIM" id="615195">
    <property type="type" value="gene"/>
</dbReference>
<dbReference type="neXtProt" id="NX_P0CG22"/>
<dbReference type="PharmGKB" id="PA134878665"/>
<dbReference type="InParanoid" id="P0CG22"/>
<dbReference type="PAN-GO" id="P0CG22">
    <property type="GO annotations" value="3 GO annotations based on evolutionary models"/>
</dbReference>
<dbReference type="PhylomeDB" id="P0CG22"/>
<dbReference type="PathwayCommons" id="P0CG22"/>
<dbReference type="ChiTaRS" id="DHRS4L1">
    <property type="organism name" value="human"/>
</dbReference>
<dbReference type="Pharos" id="P0CG22">
    <property type="development level" value="Tdark"/>
</dbReference>
<dbReference type="Proteomes" id="UP000005640">
    <property type="component" value="Unplaced"/>
</dbReference>
<dbReference type="RNAct" id="P0CG22">
    <property type="molecule type" value="protein"/>
</dbReference>
<dbReference type="GO" id="GO:0005777">
    <property type="term" value="C:peroxisome"/>
    <property type="evidence" value="ECO:0000318"/>
    <property type="project" value="GO_Central"/>
</dbReference>
<dbReference type="GO" id="GO:0004090">
    <property type="term" value="F:carbonyl reductase (NADPH) activity"/>
    <property type="evidence" value="ECO:0000318"/>
    <property type="project" value="GO_Central"/>
</dbReference>
<dbReference type="GO" id="GO:0042574">
    <property type="term" value="P:retinal metabolic process"/>
    <property type="evidence" value="ECO:0000318"/>
    <property type="project" value="GO_Central"/>
</dbReference>
<dbReference type="CDD" id="cd08936">
    <property type="entry name" value="CR_SDR_c"/>
    <property type="match status" value="1"/>
</dbReference>
<dbReference type="FunFam" id="3.40.50.720:FF:000084">
    <property type="entry name" value="Short-chain dehydrogenase reductase"/>
    <property type="match status" value="1"/>
</dbReference>
<dbReference type="Gene3D" id="3.40.50.720">
    <property type="entry name" value="NAD(P)-binding Rossmann-like Domain"/>
    <property type="match status" value="1"/>
</dbReference>
<dbReference type="InterPro" id="IPR036291">
    <property type="entry name" value="NAD(P)-bd_dom_sf"/>
</dbReference>
<dbReference type="InterPro" id="IPR020904">
    <property type="entry name" value="Sc_DH/Rdtase_CS"/>
</dbReference>
<dbReference type="InterPro" id="IPR002347">
    <property type="entry name" value="SDR_fam"/>
</dbReference>
<dbReference type="PANTHER" id="PTHR43943">
    <property type="entry name" value="DEHYDROGENASE/REDUCTASE (SDR FAMILY) MEMBER 4"/>
    <property type="match status" value="1"/>
</dbReference>
<dbReference type="PANTHER" id="PTHR43943:SF1">
    <property type="entry name" value="DEHYDROGENASE_REDUCTASE SDR FAMILY MEMBER 4-LIKE 1-RELATED"/>
    <property type="match status" value="1"/>
</dbReference>
<dbReference type="Pfam" id="PF13561">
    <property type="entry name" value="adh_short_C2"/>
    <property type="match status" value="1"/>
</dbReference>
<dbReference type="PRINTS" id="PR00081">
    <property type="entry name" value="GDHRDH"/>
</dbReference>
<dbReference type="SUPFAM" id="SSF51735">
    <property type="entry name" value="NAD(P)-binding Rossmann-fold domains"/>
    <property type="match status" value="1"/>
</dbReference>
<dbReference type="PROSITE" id="PS00061">
    <property type="entry name" value="ADH_SHORT"/>
    <property type="match status" value="1"/>
</dbReference>
<gene>
    <name evidence="8" type="primary">DHRS4L1</name>
    <name evidence="6" type="synonym">SDR25C4</name>
</gene>